<proteinExistence type="inferred from homology"/>
<feature type="chain" id="PRO_0000403246" description="Cyanate hydratase">
    <location>
        <begin position="1"/>
        <end position="164"/>
    </location>
</feature>
<feature type="active site" evidence="1">
    <location>
        <position position="104"/>
    </location>
</feature>
<feature type="active site" evidence="1">
    <location>
        <position position="107"/>
    </location>
</feature>
<feature type="active site" evidence="1">
    <location>
        <position position="130"/>
    </location>
</feature>
<evidence type="ECO:0000255" key="1">
    <source>
        <dbReference type="HAMAP-Rule" id="MF_03139"/>
    </source>
</evidence>
<keyword id="KW-0456">Lyase</keyword>
<keyword id="KW-1185">Reference proteome</keyword>
<organism>
    <name type="scientific">Botryotinia fuckeliana (strain B05.10)</name>
    <name type="common">Noble rot fungus</name>
    <name type="synonym">Botrytis cinerea</name>
    <dbReference type="NCBI Taxonomy" id="332648"/>
    <lineage>
        <taxon>Eukaryota</taxon>
        <taxon>Fungi</taxon>
        <taxon>Dikarya</taxon>
        <taxon>Ascomycota</taxon>
        <taxon>Pezizomycotina</taxon>
        <taxon>Leotiomycetes</taxon>
        <taxon>Helotiales</taxon>
        <taxon>Sclerotiniaceae</taxon>
        <taxon>Botrytis</taxon>
    </lineage>
</organism>
<dbReference type="EC" id="4.2.1.104" evidence="1"/>
<dbReference type="EMBL" id="CP009812">
    <property type="protein sequence ID" value="ATZ52947.1"/>
    <property type="molecule type" value="Genomic_DNA"/>
</dbReference>
<dbReference type="RefSeq" id="XP_001553054.1">
    <property type="nucleotide sequence ID" value="XM_001553004.1"/>
</dbReference>
<dbReference type="SMR" id="A6S6V7"/>
<dbReference type="EnsemblFungi" id="Bcin08g05630.1">
    <property type="protein sequence ID" value="Bcin08p05630.1"/>
    <property type="gene ID" value="Bcin08g05630"/>
</dbReference>
<dbReference type="GeneID" id="5433585"/>
<dbReference type="KEGG" id="bfu:BCIN_08g05630"/>
<dbReference type="VEuPathDB" id="FungiDB:Bcin08g05630"/>
<dbReference type="OMA" id="YELVMIN"/>
<dbReference type="OrthoDB" id="10019422at2759"/>
<dbReference type="Proteomes" id="UP000001798">
    <property type="component" value="Chromosome bcin08"/>
</dbReference>
<dbReference type="GO" id="GO:0008824">
    <property type="term" value="F:cyanate hydratase activity"/>
    <property type="evidence" value="ECO:0007669"/>
    <property type="project" value="UniProtKB-UniRule"/>
</dbReference>
<dbReference type="GO" id="GO:0003677">
    <property type="term" value="F:DNA binding"/>
    <property type="evidence" value="ECO:0007669"/>
    <property type="project" value="InterPro"/>
</dbReference>
<dbReference type="GO" id="GO:0009439">
    <property type="term" value="P:cyanate metabolic process"/>
    <property type="evidence" value="ECO:0007669"/>
    <property type="project" value="UniProtKB-UniRule"/>
</dbReference>
<dbReference type="CDD" id="cd00559">
    <property type="entry name" value="Cyanase_C"/>
    <property type="match status" value="1"/>
</dbReference>
<dbReference type="Gene3D" id="3.30.1160.10">
    <property type="entry name" value="Cyanate lyase, C-terminal domain"/>
    <property type="match status" value="1"/>
</dbReference>
<dbReference type="Gene3D" id="1.10.260.40">
    <property type="entry name" value="lambda repressor-like DNA-binding domains"/>
    <property type="match status" value="1"/>
</dbReference>
<dbReference type="HAMAP" id="MF_00535">
    <property type="entry name" value="Cyanate_hydrat"/>
    <property type="match status" value="1"/>
</dbReference>
<dbReference type="InterPro" id="IPR008076">
    <property type="entry name" value="Cyanase"/>
</dbReference>
<dbReference type="InterPro" id="IPR003712">
    <property type="entry name" value="Cyanate_lyase_C"/>
</dbReference>
<dbReference type="InterPro" id="IPR036581">
    <property type="entry name" value="Cyanate_lyase_C_sf"/>
</dbReference>
<dbReference type="InterPro" id="IPR010982">
    <property type="entry name" value="Lambda_DNA-bd_dom_sf"/>
</dbReference>
<dbReference type="NCBIfam" id="TIGR00673">
    <property type="entry name" value="cynS"/>
    <property type="match status" value="1"/>
</dbReference>
<dbReference type="PANTHER" id="PTHR34186">
    <property type="entry name" value="CYANATE HYDRATASE"/>
    <property type="match status" value="1"/>
</dbReference>
<dbReference type="PANTHER" id="PTHR34186:SF2">
    <property type="entry name" value="CYANATE HYDRATASE"/>
    <property type="match status" value="1"/>
</dbReference>
<dbReference type="Pfam" id="PF02560">
    <property type="entry name" value="Cyanate_lyase"/>
    <property type="match status" value="1"/>
</dbReference>
<dbReference type="PIRSF" id="PIRSF001263">
    <property type="entry name" value="Cyanate_hydratas"/>
    <property type="match status" value="1"/>
</dbReference>
<dbReference type="PRINTS" id="PR01693">
    <property type="entry name" value="CYANASE"/>
</dbReference>
<dbReference type="SMART" id="SM01116">
    <property type="entry name" value="Cyanate_lyase"/>
    <property type="match status" value="1"/>
</dbReference>
<dbReference type="SUPFAM" id="SSF55234">
    <property type="entry name" value="Cyanase C-terminal domain"/>
    <property type="match status" value="1"/>
</dbReference>
<dbReference type="SUPFAM" id="SSF47413">
    <property type="entry name" value="lambda repressor-like DNA-binding domains"/>
    <property type="match status" value="1"/>
</dbReference>
<gene>
    <name evidence="1" type="primary">cyn1</name>
    <name type="ORF">BC1G_08946</name>
    <name type="ORF">BCIN_08g05630</name>
</gene>
<reference key="1">
    <citation type="journal article" date="2011" name="PLoS Genet.">
        <title>Genomic analysis of the necrotrophic fungal pathogens Sclerotinia sclerotiorum and Botrytis cinerea.</title>
        <authorList>
            <person name="Amselem J."/>
            <person name="Cuomo C.A."/>
            <person name="van Kan J.A.L."/>
            <person name="Viaud M."/>
            <person name="Benito E.P."/>
            <person name="Couloux A."/>
            <person name="Coutinho P.M."/>
            <person name="de Vries R.P."/>
            <person name="Dyer P.S."/>
            <person name="Fillinger S."/>
            <person name="Fournier E."/>
            <person name="Gout L."/>
            <person name="Hahn M."/>
            <person name="Kohn L."/>
            <person name="Lapalu N."/>
            <person name="Plummer K.M."/>
            <person name="Pradier J.-M."/>
            <person name="Quevillon E."/>
            <person name="Sharon A."/>
            <person name="Simon A."/>
            <person name="ten Have A."/>
            <person name="Tudzynski B."/>
            <person name="Tudzynski P."/>
            <person name="Wincker P."/>
            <person name="Andrew M."/>
            <person name="Anthouard V."/>
            <person name="Beever R.E."/>
            <person name="Beffa R."/>
            <person name="Benoit I."/>
            <person name="Bouzid O."/>
            <person name="Brault B."/>
            <person name="Chen Z."/>
            <person name="Choquer M."/>
            <person name="Collemare J."/>
            <person name="Cotton P."/>
            <person name="Danchin E.G."/>
            <person name="Da Silva C."/>
            <person name="Gautier A."/>
            <person name="Giraud C."/>
            <person name="Giraud T."/>
            <person name="Gonzalez C."/>
            <person name="Grossetete S."/>
            <person name="Gueldener U."/>
            <person name="Henrissat B."/>
            <person name="Howlett B.J."/>
            <person name="Kodira C."/>
            <person name="Kretschmer M."/>
            <person name="Lappartient A."/>
            <person name="Leroch M."/>
            <person name="Levis C."/>
            <person name="Mauceli E."/>
            <person name="Neuveglise C."/>
            <person name="Oeser B."/>
            <person name="Pearson M."/>
            <person name="Poulain J."/>
            <person name="Poussereau N."/>
            <person name="Quesneville H."/>
            <person name="Rascle C."/>
            <person name="Schumacher J."/>
            <person name="Segurens B."/>
            <person name="Sexton A."/>
            <person name="Silva E."/>
            <person name="Sirven C."/>
            <person name="Soanes D.M."/>
            <person name="Talbot N.J."/>
            <person name="Templeton M."/>
            <person name="Yandava C."/>
            <person name="Yarden O."/>
            <person name="Zeng Q."/>
            <person name="Rollins J.A."/>
            <person name="Lebrun M.-H."/>
            <person name="Dickman M."/>
        </authorList>
    </citation>
    <scope>NUCLEOTIDE SEQUENCE [LARGE SCALE GENOMIC DNA]</scope>
    <source>
        <strain>B05.10</strain>
    </source>
</reference>
<reference key="2">
    <citation type="journal article" date="2012" name="Eukaryot. Cell">
        <title>Genome update of Botrytis cinerea strains B05.10 and T4.</title>
        <authorList>
            <person name="Staats M."/>
            <person name="van Kan J.A.L."/>
        </authorList>
    </citation>
    <scope>NUCLEOTIDE SEQUENCE [LARGE SCALE GENOMIC DNA]</scope>
    <scope>GENOME REANNOTATION</scope>
    <source>
        <strain>B05.10</strain>
    </source>
</reference>
<reference key="3">
    <citation type="journal article" date="2017" name="Mol. Plant Pathol.">
        <title>A gapless genome sequence of the fungus Botrytis cinerea.</title>
        <authorList>
            <person name="van Kan J.A.L."/>
            <person name="Stassen J.H.M."/>
            <person name="Mosbach A."/>
            <person name="van der Lee T.A.J."/>
            <person name="Faino L."/>
            <person name="Farmer A.D."/>
            <person name="Papasotiriou D.G."/>
            <person name="Zhou S."/>
            <person name="Seidl M.F."/>
            <person name="Cottam E."/>
            <person name="Edel D."/>
            <person name="Hahn M."/>
            <person name="Schwartz D.C."/>
            <person name="Dietrich R.A."/>
            <person name="Widdison S."/>
            <person name="Scalliet G."/>
        </authorList>
    </citation>
    <scope>NUCLEOTIDE SEQUENCE [LARGE SCALE GENOMIC DNA]</scope>
    <scope>GENOME REANNOTATION</scope>
    <source>
        <strain>B05.10</strain>
    </source>
</reference>
<accession>A6S6V7</accession>
<accession>A0A384JRC7</accession>
<protein>
    <recommendedName>
        <fullName evidence="1">Cyanate hydratase</fullName>
        <shortName evidence="1">Cyanase</shortName>
        <ecNumber evidence="1">4.2.1.104</ecNumber>
    </recommendedName>
    <alternativeName>
        <fullName evidence="1">Cyanate hydrolase</fullName>
    </alternativeName>
    <alternativeName>
        <fullName evidence="1">Cyanate lyase</fullName>
    </alternativeName>
</protein>
<name>CYNS_BOTFB</name>
<sequence>MADQTKIATLDSTLIDRLPTSSKTLFEAKATKALTFESIANELGRSEVAVAALFYGQSQASAADIEKLSQILDVPQSKLEAELGGFPDRGRAGPMPPVEPLIYRLYEIVQNYGYAYKAVMNEKFGDGIMSAISFSTKVEKETDEQGNNWAVITLRGKWLPFSRF</sequence>
<comment type="function">
    <text evidence="1">Catalyzes the reaction of cyanate with bicarbonate to produce ammonia and carbon dioxide.</text>
</comment>
<comment type="catalytic activity">
    <reaction evidence="1">
        <text>cyanate + hydrogencarbonate + 3 H(+) = NH4(+) + 2 CO2</text>
        <dbReference type="Rhea" id="RHEA:11120"/>
        <dbReference type="ChEBI" id="CHEBI:15378"/>
        <dbReference type="ChEBI" id="CHEBI:16526"/>
        <dbReference type="ChEBI" id="CHEBI:17544"/>
        <dbReference type="ChEBI" id="CHEBI:28938"/>
        <dbReference type="ChEBI" id="CHEBI:29195"/>
        <dbReference type="EC" id="4.2.1.104"/>
    </reaction>
</comment>
<comment type="similarity">
    <text evidence="1">Belongs to the cyanase family.</text>
</comment>